<name>5DNU_SALPC</name>
<feature type="chain" id="PRO_1000149897" description="5'-deoxynucleotidase YfbR">
    <location>
        <begin position="1"/>
        <end position="199"/>
    </location>
</feature>
<feature type="domain" description="HD" evidence="2">
    <location>
        <begin position="30"/>
        <end position="142"/>
    </location>
</feature>
<feature type="binding site" evidence="1">
    <location>
        <begin position="18"/>
        <end position="19"/>
    </location>
    <ligand>
        <name>substrate</name>
    </ligand>
</feature>
<feature type="binding site" evidence="1">
    <location>
        <position position="33"/>
    </location>
    <ligand>
        <name>a divalent metal cation</name>
        <dbReference type="ChEBI" id="CHEBI:60240"/>
    </ligand>
</feature>
<feature type="binding site" evidence="1">
    <location>
        <position position="33"/>
    </location>
    <ligand>
        <name>substrate</name>
    </ligand>
</feature>
<feature type="binding site" evidence="1">
    <location>
        <position position="68"/>
    </location>
    <ligand>
        <name>a divalent metal cation</name>
        <dbReference type="ChEBI" id="CHEBI:60240"/>
    </ligand>
</feature>
<feature type="binding site" evidence="1">
    <location>
        <position position="69"/>
    </location>
    <ligand>
        <name>a divalent metal cation</name>
        <dbReference type="ChEBI" id="CHEBI:60240"/>
    </ligand>
</feature>
<feature type="binding site" evidence="1">
    <location>
        <position position="69"/>
    </location>
    <ligand>
        <name>substrate</name>
    </ligand>
</feature>
<feature type="binding site" evidence="1">
    <location>
        <begin position="77"/>
        <end position="80"/>
    </location>
    <ligand>
        <name>substrate</name>
    </ligand>
</feature>
<feature type="binding site" evidence="1">
    <location>
        <position position="137"/>
    </location>
    <ligand>
        <name>a divalent metal cation</name>
        <dbReference type="ChEBI" id="CHEBI:60240"/>
    </ligand>
</feature>
<feature type="binding site" evidence="1">
    <location>
        <position position="137"/>
    </location>
    <ligand>
        <name>substrate</name>
    </ligand>
</feature>
<feature type="site" description="Appears to be important in orienting the phosphate for catalysis" evidence="1">
    <location>
        <position position="18"/>
    </location>
</feature>
<keyword id="KW-0963">Cytoplasm</keyword>
<keyword id="KW-0378">Hydrolase</keyword>
<keyword id="KW-0479">Metal-binding</keyword>
<keyword id="KW-0547">Nucleotide-binding</keyword>
<accession>C0Q034</accession>
<protein>
    <recommendedName>
        <fullName evidence="1">5'-deoxynucleotidase YfbR</fullName>
        <ecNumber evidence="1">3.1.3.89</ecNumber>
    </recommendedName>
    <alternativeName>
        <fullName evidence="1">5'-deoxyribonucleotidase</fullName>
    </alternativeName>
    <alternativeName>
        <fullName evidence="1">Nucleoside 5'-monophosphate phosphohydrolase</fullName>
    </alternativeName>
</protein>
<comment type="function">
    <text evidence="1">Catalyzes the strictly specific dephosphorylation of 2'-deoxyribonucleoside 5'-monophosphates.</text>
</comment>
<comment type="catalytic activity">
    <reaction evidence="1">
        <text>a 2'-deoxyribonucleoside 5'-phosphate + H2O = a 2'-deoxyribonucleoside + phosphate</text>
        <dbReference type="Rhea" id="RHEA:36167"/>
        <dbReference type="ChEBI" id="CHEBI:15377"/>
        <dbReference type="ChEBI" id="CHEBI:18274"/>
        <dbReference type="ChEBI" id="CHEBI:43474"/>
        <dbReference type="ChEBI" id="CHEBI:65317"/>
        <dbReference type="EC" id="3.1.3.89"/>
    </reaction>
</comment>
<comment type="cofactor">
    <cofactor evidence="1">
        <name>a divalent metal cation</name>
        <dbReference type="ChEBI" id="CHEBI:60240"/>
    </cofactor>
</comment>
<comment type="subunit">
    <text evidence="1">Homodimer.</text>
</comment>
<comment type="subcellular location">
    <subcellularLocation>
        <location evidence="1">Cytoplasm</location>
    </subcellularLocation>
</comment>
<comment type="similarity">
    <text evidence="1">Belongs to the 5DNU family.</text>
</comment>
<organism>
    <name type="scientific">Salmonella paratyphi C (strain RKS4594)</name>
    <dbReference type="NCBI Taxonomy" id="476213"/>
    <lineage>
        <taxon>Bacteria</taxon>
        <taxon>Pseudomonadati</taxon>
        <taxon>Pseudomonadota</taxon>
        <taxon>Gammaproteobacteria</taxon>
        <taxon>Enterobacterales</taxon>
        <taxon>Enterobacteriaceae</taxon>
        <taxon>Salmonella</taxon>
    </lineage>
</organism>
<evidence type="ECO:0000255" key="1">
    <source>
        <dbReference type="HAMAP-Rule" id="MF_01100"/>
    </source>
</evidence>
<evidence type="ECO:0000255" key="2">
    <source>
        <dbReference type="PROSITE-ProRule" id="PRU01175"/>
    </source>
</evidence>
<dbReference type="EC" id="3.1.3.89" evidence="1"/>
<dbReference type="EMBL" id="CP000857">
    <property type="protein sequence ID" value="ACN45538.1"/>
    <property type="molecule type" value="Genomic_DNA"/>
</dbReference>
<dbReference type="RefSeq" id="WP_000813882.1">
    <property type="nucleotide sequence ID" value="NC_012125.1"/>
</dbReference>
<dbReference type="SMR" id="C0Q034"/>
<dbReference type="KEGG" id="sei:SPC_1376"/>
<dbReference type="HOGENOM" id="CLU_084784_0_0_6"/>
<dbReference type="Proteomes" id="UP000001599">
    <property type="component" value="Chromosome"/>
</dbReference>
<dbReference type="GO" id="GO:0005737">
    <property type="term" value="C:cytoplasm"/>
    <property type="evidence" value="ECO:0007669"/>
    <property type="project" value="UniProtKB-SubCell"/>
</dbReference>
<dbReference type="GO" id="GO:0002953">
    <property type="term" value="F:5'-deoxynucleotidase activity"/>
    <property type="evidence" value="ECO:0007669"/>
    <property type="project" value="UniProtKB-EC"/>
</dbReference>
<dbReference type="GO" id="GO:0046872">
    <property type="term" value="F:metal ion binding"/>
    <property type="evidence" value="ECO:0007669"/>
    <property type="project" value="UniProtKB-KW"/>
</dbReference>
<dbReference type="GO" id="GO:0000166">
    <property type="term" value="F:nucleotide binding"/>
    <property type="evidence" value="ECO:0007669"/>
    <property type="project" value="UniProtKB-KW"/>
</dbReference>
<dbReference type="FunFam" id="1.10.3210.10:FF:000002">
    <property type="entry name" value="Nucleotidase YfbR"/>
    <property type="match status" value="1"/>
</dbReference>
<dbReference type="Gene3D" id="1.10.3210.10">
    <property type="entry name" value="Hypothetical protein af1432"/>
    <property type="match status" value="1"/>
</dbReference>
<dbReference type="HAMAP" id="MF_01100">
    <property type="entry name" value="5DNU"/>
    <property type="match status" value="1"/>
</dbReference>
<dbReference type="InterPro" id="IPR003607">
    <property type="entry name" value="HD/PDEase_dom"/>
</dbReference>
<dbReference type="InterPro" id="IPR006674">
    <property type="entry name" value="HD_domain"/>
</dbReference>
<dbReference type="InterPro" id="IPR022971">
    <property type="entry name" value="YfbR"/>
</dbReference>
<dbReference type="InterPro" id="IPR039356">
    <property type="entry name" value="YfbR/HDDC2"/>
</dbReference>
<dbReference type="NCBIfam" id="NF003009">
    <property type="entry name" value="PRK03826.1"/>
    <property type="match status" value="1"/>
</dbReference>
<dbReference type="PANTHER" id="PTHR11845">
    <property type="entry name" value="5'-DEOXYNUCLEOTIDASE HDDC2"/>
    <property type="match status" value="1"/>
</dbReference>
<dbReference type="PANTHER" id="PTHR11845:SF13">
    <property type="entry name" value="5'-DEOXYNUCLEOTIDASE HDDC2"/>
    <property type="match status" value="1"/>
</dbReference>
<dbReference type="Pfam" id="PF12917">
    <property type="entry name" value="YfbR-like"/>
    <property type="match status" value="1"/>
</dbReference>
<dbReference type="SMART" id="SM00471">
    <property type="entry name" value="HDc"/>
    <property type="match status" value="1"/>
</dbReference>
<dbReference type="SUPFAM" id="SSF109604">
    <property type="entry name" value="HD-domain/PDEase-like"/>
    <property type="match status" value="1"/>
</dbReference>
<dbReference type="PROSITE" id="PS51831">
    <property type="entry name" value="HD"/>
    <property type="match status" value="1"/>
</dbReference>
<gene>
    <name evidence="1" type="primary">yfbR</name>
    <name type="ordered locus">SPC_1376</name>
</gene>
<reference key="1">
    <citation type="journal article" date="2009" name="PLoS ONE">
        <title>Salmonella paratyphi C: genetic divergence from Salmonella choleraesuis and pathogenic convergence with Salmonella typhi.</title>
        <authorList>
            <person name="Liu W.-Q."/>
            <person name="Feng Y."/>
            <person name="Wang Y."/>
            <person name="Zou Q.-H."/>
            <person name="Chen F."/>
            <person name="Guo J.-T."/>
            <person name="Peng Y.-H."/>
            <person name="Jin Y."/>
            <person name="Li Y.-G."/>
            <person name="Hu S.-N."/>
            <person name="Johnston R.N."/>
            <person name="Liu G.-R."/>
            <person name="Liu S.-L."/>
        </authorList>
    </citation>
    <scope>NUCLEOTIDE SEQUENCE [LARGE SCALE GENOMIC DNA]</scope>
    <source>
        <strain>RKS4594</strain>
    </source>
</reference>
<proteinExistence type="inferred from homology"/>
<sequence>MKQSHFFAHLSRMKLINRWPLMRNVRTENVSEHSLQVAMVAHALAAIKNRKFGGQLNAERIALLAMYHDASEVLTGDLPTPVKYFNSQIAQEYKAIEKIAQQKLVDMAPDELRDIFAPLIDENAWSEEEQAIVKQADALCAYLKCLEELSAGNNEFGLAKTRLEKTLELRRSQEMDYFMAVFVPSFHLSLDEISQDSPL</sequence>